<reference key="1">
    <citation type="journal article" date="2007" name="Genome Biol.">
        <title>Characterization and modeling of the Haemophilus influenzae core and supragenomes based on the complete genomic sequences of Rd and 12 clinical nontypeable strains.</title>
        <authorList>
            <person name="Hogg J.S."/>
            <person name="Hu F.Z."/>
            <person name="Janto B."/>
            <person name="Boissy R."/>
            <person name="Hayes J."/>
            <person name="Keefe R."/>
            <person name="Post J.C."/>
            <person name="Ehrlich G.D."/>
        </authorList>
    </citation>
    <scope>NUCLEOTIDE SEQUENCE [LARGE SCALE GENOMIC DNA]</scope>
    <source>
        <strain>PittEE</strain>
    </source>
</reference>
<feature type="chain" id="PRO_1000054193" description="GTP 3',8-cyclase">
    <location>
        <begin position="1"/>
        <end position="337"/>
    </location>
</feature>
<feature type="domain" description="Radical SAM core" evidence="2">
    <location>
        <begin position="17"/>
        <end position="243"/>
    </location>
</feature>
<feature type="binding site" evidence="1">
    <location>
        <position position="26"/>
    </location>
    <ligand>
        <name>GTP</name>
        <dbReference type="ChEBI" id="CHEBI:37565"/>
    </ligand>
</feature>
<feature type="binding site" evidence="1">
    <location>
        <position position="33"/>
    </location>
    <ligand>
        <name>[4Fe-4S] cluster</name>
        <dbReference type="ChEBI" id="CHEBI:49883"/>
        <label>1</label>
        <note>4Fe-4S-S-AdoMet</note>
    </ligand>
</feature>
<feature type="binding site" evidence="1">
    <location>
        <position position="37"/>
    </location>
    <ligand>
        <name>[4Fe-4S] cluster</name>
        <dbReference type="ChEBI" id="CHEBI:49883"/>
        <label>1</label>
        <note>4Fe-4S-S-AdoMet</note>
    </ligand>
</feature>
<feature type="binding site" evidence="1">
    <location>
        <position position="39"/>
    </location>
    <ligand>
        <name>S-adenosyl-L-methionine</name>
        <dbReference type="ChEBI" id="CHEBI:59789"/>
    </ligand>
</feature>
<feature type="binding site" evidence="1">
    <location>
        <position position="40"/>
    </location>
    <ligand>
        <name>[4Fe-4S] cluster</name>
        <dbReference type="ChEBI" id="CHEBI:49883"/>
        <label>1</label>
        <note>4Fe-4S-S-AdoMet</note>
    </ligand>
</feature>
<feature type="binding site" evidence="1">
    <location>
        <position position="76"/>
    </location>
    <ligand>
        <name>GTP</name>
        <dbReference type="ChEBI" id="CHEBI:37565"/>
    </ligand>
</feature>
<feature type="binding site" evidence="1">
    <location>
        <position position="80"/>
    </location>
    <ligand>
        <name>S-adenosyl-L-methionine</name>
        <dbReference type="ChEBI" id="CHEBI:59789"/>
    </ligand>
</feature>
<feature type="binding site" evidence="1">
    <location>
        <position position="107"/>
    </location>
    <ligand>
        <name>GTP</name>
        <dbReference type="ChEBI" id="CHEBI:37565"/>
    </ligand>
</feature>
<feature type="binding site" evidence="1">
    <location>
        <position position="131"/>
    </location>
    <ligand>
        <name>S-adenosyl-L-methionine</name>
        <dbReference type="ChEBI" id="CHEBI:59789"/>
    </ligand>
</feature>
<feature type="binding site" evidence="1">
    <location>
        <position position="168"/>
    </location>
    <ligand>
        <name>GTP</name>
        <dbReference type="ChEBI" id="CHEBI:37565"/>
    </ligand>
</feature>
<feature type="binding site" evidence="1">
    <location>
        <position position="202"/>
    </location>
    <ligand>
        <name>S-adenosyl-L-methionine</name>
        <dbReference type="ChEBI" id="CHEBI:59789"/>
    </ligand>
</feature>
<feature type="binding site" evidence="1">
    <location>
        <position position="265"/>
    </location>
    <ligand>
        <name>[4Fe-4S] cluster</name>
        <dbReference type="ChEBI" id="CHEBI:49883"/>
        <label>2</label>
        <note>4Fe-4S-substrate</note>
    </ligand>
</feature>
<feature type="binding site" evidence="1">
    <location>
        <position position="268"/>
    </location>
    <ligand>
        <name>[4Fe-4S] cluster</name>
        <dbReference type="ChEBI" id="CHEBI:49883"/>
        <label>2</label>
        <note>4Fe-4S-substrate</note>
    </ligand>
</feature>
<feature type="binding site" evidence="1">
    <location>
        <begin position="270"/>
        <end position="272"/>
    </location>
    <ligand>
        <name>GTP</name>
        <dbReference type="ChEBI" id="CHEBI:37565"/>
    </ligand>
</feature>
<feature type="binding site" evidence="1">
    <location>
        <position position="282"/>
    </location>
    <ligand>
        <name>[4Fe-4S] cluster</name>
        <dbReference type="ChEBI" id="CHEBI:49883"/>
        <label>2</label>
        <note>4Fe-4S-substrate</note>
    </ligand>
</feature>
<name>MOAA_HAEIE</name>
<evidence type="ECO:0000255" key="1">
    <source>
        <dbReference type="HAMAP-Rule" id="MF_01225"/>
    </source>
</evidence>
<evidence type="ECO:0000255" key="2">
    <source>
        <dbReference type="PROSITE-ProRule" id="PRU01266"/>
    </source>
</evidence>
<proteinExistence type="inferred from homology"/>
<keyword id="KW-0004">4Fe-4S</keyword>
<keyword id="KW-0342">GTP-binding</keyword>
<keyword id="KW-0408">Iron</keyword>
<keyword id="KW-0411">Iron-sulfur</keyword>
<keyword id="KW-0456">Lyase</keyword>
<keyword id="KW-0479">Metal-binding</keyword>
<keyword id="KW-0501">Molybdenum cofactor biosynthesis</keyword>
<keyword id="KW-0547">Nucleotide-binding</keyword>
<keyword id="KW-0949">S-adenosyl-L-methionine</keyword>
<dbReference type="EC" id="4.1.99.22" evidence="1"/>
<dbReference type="EMBL" id="CP000671">
    <property type="protein sequence ID" value="ABQ98155.1"/>
    <property type="molecule type" value="Genomic_DNA"/>
</dbReference>
<dbReference type="SMR" id="A5UBK4"/>
<dbReference type="KEGG" id="hip:CGSHiEE_03680"/>
<dbReference type="HOGENOM" id="CLU_009273_0_1_6"/>
<dbReference type="UniPathway" id="UPA00344"/>
<dbReference type="GO" id="GO:0051539">
    <property type="term" value="F:4 iron, 4 sulfur cluster binding"/>
    <property type="evidence" value="ECO:0007669"/>
    <property type="project" value="UniProtKB-UniRule"/>
</dbReference>
<dbReference type="GO" id="GO:0061799">
    <property type="term" value="F:cyclic pyranopterin monophosphate synthase activity"/>
    <property type="evidence" value="ECO:0007669"/>
    <property type="project" value="TreeGrafter"/>
</dbReference>
<dbReference type="GO" id="GO:0061798">
    <property type="term" value="F:GTP 3',8'-cyclase activity"/>
    <property type="evidence" value="ECO:0007669"/>
    <property type="project" value="UniProtKB-UniRule"/>
</dbReference>
<dbReference type="GO" id="GO:0005525">
    <property type="term" value="F:GTP binding"/>
    <property type="evidence" value="ECO:0007669"/>
    <property type="project" value="UniProtKB-UniRule"/>
</dbReference>
<dbReference type="GO" id="GO:0046872">
    <property type="term" value="F:metal ion binding"/>
    <property type="evidence" value="ECO:0007669"/>
    <property type="project" value="UniProtKB-KW"/>
</dbReference>
<dbReference type="GO" id="GO:1904047">
    <property type="term" value="F:S-adenosyl-L-methionine binding"/>
    <property type="evidence" value="ECO:0007669"/>
    <property type="project" value="UniProtKB-UniRule"/>
</dbReference>
<dbReference type="GO" id="GO:0006777">
    <property type="term" value="P:Mo-molybdopterin cofactor biosynthetic process"/>
    <property type="evidence" value="ECO:0007669"/>
    <property type="project" value="UniProtKB-UniRule"/>
</dbReference>
<dbReference type="CDD" id="cd01335">
    <property type="entry name" value="Radical_SAM"/>
    <property type="match status" value="1"/>
</dbReference>
<dbReference type="CDD" id="cd21117">
    <property type="entry name" value="Twitch_MoaA"/>
    <property type="match status" value="1"/>
</dbReference>
<dbReference type="FunFam" id="3.20.20.70:FF:000057">
    <property type="entry name" value="GTP 3',8-cyclase"/>
    <property type="match status" value="1"/>
</dbReference>
<dbReference type="Gene3D" id="3.20.20.70">
    <property type="entry name" value="Aldolase class I"/>
    <property type="match status" value="1"/>
</dbReference>
<dbReference type="HAMAP" id="MF_01225_B">
    <property type="entry name" value="MoaA_B"/>
    <property type="match status" value="1"/>
</dbReference>
<dbReference type="InterPro" id="IPR013785">
    <property type="entry name" value="Aldolase_TIM"/>
</dbReference>
<dbReference type="InterPro" id="IPR006638">
    <property type="entry name" value="Elp3/MiaA/NifB-like_rSAM"/>
</dbReference>
<dbReference type="InterPro" id="IPR013483">
    <property type="entry name" value="MoaA"/>
</dbReference>
<dbReference type="InterPro" id="IPR000385">
    <property type="entry name" value="MoaA_NifB_PqqE_Fe-S-bd_CS"/>
</dbReference>
<dbReference type="InterPro" id="IPR010505">
    <property type="entry name" value="MoaA_twitch"/>
</dbReference>
<dbReference type="InterPro" id="IPR050105">
    <property type="entry name" value="MoCo_biosynth_MoaA/MoaC"/>
</dbReference>
<dbReference type="InterPro" id="IPR007197">
    <property type="entry name" value="rSAM"/>
</dbReference>
<dbReference type="NCBIfam" id="TIGR02666">
    <property type="entry name" value="moaA"/>
    <property type="match status" value="1"/>
</dbReference>
<dbReference type="PANTHER" id="PTHR22960:SF28">
    <property type="entry name" value="GTP 3',8-CYCLASE"/>
    <property type="match status" value="1"/>
</dbReference>
<dbReference type="PANTHER" id="PTHR22960">
    <property type="entry name" value="MOLYBDOPTERIN COFACTOR SYNTHESIS PROTEIN A"/>
    <property type="match status" value="1"/>
</dbReference>
<dbReference type="Pfam" id="PF13353">
    <property type="entry name" value="Fer4_12"/>
    <property type="match status" value="1"/>
</dbReference>
<dbReference type="Pfam" id="PF06463">
    <property type="entry name" value="Mob_synth_C"/>
    <property type="match status" value="1"/>
</dbReference>
<dbReference type="Pfam" id="PF04055">
    <property type="entry name" value="Radical_SAM"/>
    <property type="match status" value="1"/>
</dbReference>
<dbReference type="SFLD" id="SFLDG01383">
    <property type="entry name" value="cyclic_pyranopterin_phosphate"/>
    <property type="match status" value="1"/>
</dbReference>
<dbReference type="SFLD" id="SFLDG01386">
    <property type="entry name" value="main_SPASM_domain-containing"/>
    <property type="match status" value="1"/>
</dbReference>
<dbReference type="SMART" id="SM00729">
    <property type="entry name" value="Elp3"/>
    <property type="match status" value="1"/>
</dbReference>
<dbReference type="SUPFAM" id="SSF102114">
    <property type="entry name" value="Radical SAM enzymes"/>
    <property type="match status" value="1"/>
</dbReference>
<dbReference type="PROSITE" id="PS01305">
    <property type="entry name" value="MOAA_NIFB_PQQE"/>
    <property type="match status" value="1"/>
</dbReference>
<dbReference type="PROSITE" id="PS51918">
    <property type="entry name" value="RADICAL_SAM"/>
    <property type="match status" value="1"/>
</dbReference>
<sequence>MQSIPIKNVGESRLVDPFQRQYYYLRLSITDQCNFRCTYCLPDGYQPEANKPSFLTLKEITHLAQAFAEMGTEKIRLTGGEPTLRKDFISIAESIANIEGIRQLAVTTNGYRMAKDVADWKKVGITSINVSVDSLDPKMFHQITGINKFDDVMRGIDRAFEAGYNKVKVNSVLMKNLNDKEFEQFLVWVKDRPIQMRFIELMQTGEMDSFFDRYHLSGQVLADKLLKNGWILQHKSHTDGPAKVFTHSDYAGEIGLIMPYEKNFCASCNRLRVSAKGKLHLCLFGEEGIELRDLLQSHEQQAILQARIFAALQGKREHHYLHIGDTGVRNHLASIGG</sequence>
<protein>
    <recommendedName>
        <fullName evidence="1">GTP 3',8-cyclase</fullName>
        <ecNumber evidence="1">4.1.99.22</ecNumber>
    </recommendedName>
    <alternativeName>
        <fullName evidence="1">Molybdenum cofactor biosynthesis protein A</fullName>
    </alternativeName>
</protein>
<comment type="function">
    <text evidence="1">Catalyzes the cyclization of GTP to (8S)-3',8-cyclo-7,8-dihydroguanosine 5'-triphosphate.</text>
</comment>
<comment type="catalytic activity">
    <reaction evidence="1">
        <text>GTP + AH2 + S-adenosyl-L-methionine = (8S)-3',8-cyclo-7,8-dihydroguanosine 5'-triphosphate + 5'-deoxyadenosine + L-methionine + A + H(+)</text>
        <dbReference type="Rhea" id="RHEA:49576"/>
        <dbReference type="ChEBI" id="CHEBI:13193"/>
        <dbReference type="ChEBI" id="CHEBI:15378"/>
        <dbReference type="ChEBI" id="CHEBI:17319"/>
        <dbReference type="ChEBI" id="CHEBI:17499"/>
        <dbReference type="ChEBI" id="CHEBI:37565"/>
        <dbReference type="ChEBI" id="CHEBI:57844"/>
        <dbReference type="ChEBI" id="CHEBI:59789"/>
        <dbReference type="ChEBI" id="CHEBI:131766"/>
        <dbReference type="EC" id="4.1.99.22"/>
    </reaction>
</comment>
<comment type="cofactor">
    <cofactor evidence="1">
        <name>[4Fe-4S] cluster</name>
        <dbReference type="ChEBI" id="CHEBI:49883"/>
    </cofactor>
    <text evidence="1">Binds 2 [4Fe-4S] clusters. Binds 1 [4Fe-4S] cluster coordinated with 3 cysteines and an exchangeable S-adenosyl-L-methionine and 1 [4Fe-4S] cluster coordinated with 3 cysteines and the GTP-derived substrate.</text>
</comment>
<comment type="pathway">
    <text evidence="1">Cofactor biosynthesis; molybdopterin biosynthesis.</text>
</comment>
<comment type="subunit">
    <text evidence="1">Monomer and homodimer.</text>
</comment>
<comment type="similarity">
    <text evidence="1">Belongs to the radical SAM superfamily. MoaA family.</text>
</comment>
<accession>A5UBK4</accession>
<organism>
    <name type="scientific">Haemophilus influenzae (strain PittEE)</name>
    <dbReference type="NCBI Taxonomy" id="374930"/>
    <lineage>
        <taxon>Bacteria</taxon>
        <taxon>Pseudomonadati</taxon>
        <taxon>Pseudomonadota</taxon>
        <taxon>Gammaproteobacteria</taxon>
        <taxon>Pasteurellales</taxon>
        <taxon>Pasteurellaceae</taxon>
        <taxon>Haemophilus</taxon>
    </lineage>
</organism>
<gene>
    <name evidence="1" type="primary">moaA</name>
    <name type="ordered locus">CGSHiEE_03680</name>
</gene>